<comment type="function">
    <text evidence="1">Involved in urease metallocenter assembly. Binds nickel. Probably functions as a nickel donor during metallocenter assembly.</text>
</comment>
<comment type="subcellular location">
    <subcellularLocation>
        <location evidence="1">Cytoplasm</location>
    </subcellularLocation>
</comment>
<comment type="similarity">
    <text evidence="1">Belongs to the UreE family.</text>
</comment>
<accession>Q6UR59</accession>
<feature type="chain" id="PRO_0000223458" description="Urease accessory protein UreE">
    <location>
        <begin position="1"/>
        <end position="226"/>
    </location>
</feature>
<feature type="region of interest" description="Disordered" evidence="2">
    <location>
        <begin position="192"/>
        <end position="226"/>
    </location>
</feature>
<feature type="compositionally biased region" description="Basic and acidic residues" evidence="2">
    <location>
        <begin position="204"/>
        <end position="226"/>
    </location>
</feature>
<proteinExistence type="inferred from homology"/>
<protein>
    <recommendedName>
        <fullName evidence="1">Urease accessory protein UreE</fullName>
    </recommendedName>
</protein>
<keyword id="KW-0143">Chaperone</keyword>
<keyword id="KW-0963">Cytoplasm</keyword>
<keyword id="KW-0533">Nickel</keyword>
<keyword id="KW-0996">Nickel insertion</keyword>
<reference key="1">
    <citation type="submission" date="2003-08" db="EMBL/GenBank/DDBJ databases">
        <title>Yersinia intermedia urease gene locus (ureABCEFGD), urea transporter gene (yut) and nickel transporter gene (ureH).</title>
        <authorList>
            <person name="Sebbane F."/>
            <person name="Lemaitre N."/>
            <person name="Simonet M."/>
        </authorList>
    </citation>
    <scope>NUCLEOTIDE SEQUENCE [GENOMIC DNA]</scope>
</reference>
<organism>
    <name type="scientific">Yersinia intermedia</name>
    <dbReference type="NCBI Taxonomy" id="631"/>
    <lineage>
        <taxon>Bacteria</taxon>
        <taxon>Pseudomonadati</taxon>
        <taxon>Pseudomonadota</taxon>
        <taxon>Gammaproteobacteria</taxon>
        <taxon>Enterobacterales</taxon>
        <taxon>Yersiniaceae</taxon>
        <taxon>Yersinia</taxon>
    </lineage>
</organism>
<name>UREE_YERIN</name>
<sequence length="226" mass="25225">MILIEHILGNVKKDPVWQAKLKNATVDLLVLDQREAQKSRCRKSTLQGLDLGISLDRHVVLADGDVLTWDEESNVAVVVQIHLRDVMVIDLSELKNRSADELIKTCFELGHALGNQHWKAVTKNNEVYVPLTVATTMMDSVMRTHGFQHLPFRFVKGAEILPLLTNSEARLLFGGAEDTDTHVHVASPLDEPHGSGLHIHSIHSHGDGHSHDHDHSHGDHDSDHKH</sequence>
<evidence type="ECO:0000255" key="1">
    <source>
        <dbReference type="HAMAP-Rule" id="MF_00822"/>
    </source>
</evidence>
<evidence type="ECO:0000256" key="2">
    <source>
        <dbReference type="SAM" id="MobiDB-lite"/>
    </source>
</evidence>
<dbReference type="EMBL" id="AY363683">
    <property type="protein sequence ID" value="AAR15111.1"/>
    <property type="molecule type" value="Genomic_DNA"/>
</dbReference>
<dbReference type="RefSeq" id="WP_050084642.1">
    <property type="nucleotide sequence ID" value="NZ_CABHXW010000007.1"/>
</dbReference>
<dbReference type="SMR" id="Q6UR59"/>
<dbReference type="STRING" id="631.CH53_728"/>
<dbReference type="eggNOG" id="COG2371">
    <property type="taxonomic scope" value="Bacteria"/>
</dbReference>
<dbReference type="GO" id="GO:0005737">
    <property type="term" value="C:cytoplasm"/>
    <property type="evidence" value="ECO:0007669"/>
    <property type="project" value="UniProtKB-SubCell"/>
</dbReference>
<dbReference type="GO" id="GO:0016151">
    <property type="term" value="F:nickel cation binding"/>
    <property type="evidence" value="ECO:0007669"/>
    <property type="project" value="UniProtKB-UniRule"/>
</dbReference>
<dbReference type="GO" id="GO:0051082">
    <property type="term" value="F:unfolded protein binding"/>
    <property type="evidence" value="ECO:0007669"/>
    <property type="project" value="UniProtKB-UniRule"/>
</dbReference>
<dbReference type="GO" id="GO:0006457">
    <property type="term" value="P:protein folding"/>
    <property type="evidence" value="ECO:0007669"/>
    <property type="project" value="InterPro"/>
</dbReference>
<dbReference type="CDD" id="cd00571">
    <property type="entry name" value="UreE"/>
    <property type="match status" value="1"/>
</dbReference>
<dbReference type="Gene3D" id="2.60.260.20">
    <property type="entry name" value="Urease metallochaperone UreE, N-terminal domain"/>
    <property type="match status" value="1"/>
</dbReference>
<dbReference type="HAMAP" id="MF_00822">
    <property type="entry name" value="UreE"/>
    <property type="match status" value="1"/>
</dbReference>
<dbReference type="InterPro" id="IPR012406">
    <property type="entry name" value="UreE"/>
</dbReference>
<dbReference type="InterPro" id="IPR004029">
    <property type="entry name" value="UreE_N"/>
</dbReference>
<dbReference type="InterPro" id="IPR036118">
    <property type="entry name" value="UreE_N_sf"/>
</dbReference>
<dbReference type="NCBIfam" id="NF009761">
    <property type="entry name" value="PRK13262.1"/>
    <property type="match status" value="1"/>
</dbReference>
<dbReference type="Pfam" id="PF02814">
    <property type="entry name" value="UreE_N"/>
    <property type="match status" value="1"/>
</dbReference>
<dbReference type="PIRSF" id="PIRSF036402">
    <property type="entry name" value="Ureas_acces_UreE"/>
    <property type="match status" value="1"/>
</dbReference>
<dbReference type="SMART" id="SM00988">
    <property type="entry name" value="UreE_N"/>
    <property type="match status" value="1"/>
</dbReference>
<dbReference type="SUPFAM" id="SSF69287">
    <property type="entry name" value="Urease metallochaperone UreE, N-terminal domain"/>
    <property type="match status" value="1"/>
</dbReference>
<gene>
    <name evidence="1" type="primary">ureE</name>
</gene>